<reference key="1">
    <citation type="journal article" date="2008" name="PLoS ONE">
        <title>Comparative analysis of Acinetobacters: three genomes for three lifestyles.</title>
        <authorList>
            <person name="Vallenet D."/>
            <person name="Nordmann P."/>
            <person name="Barbe V."/>
            <person name="Poirel L."/>
            <person name="Mangenot S."/>
            <person name="Bataille E."/>
            <person name="Dossat C."/>
            <person name="Gas S."/>
            <person name="Kreimeyer A."/>
            <person name="Lenoble P."/>
            <person name="Oztas S."/>
            <person name="Poulain J."/>
            <person name="Segurens B."/>
            <person name="Robert C."/>
            <person name="Abergel C."/>
            <person name="Claverie J.-M."/>
            <person name="Raoult D."/>
            <person name="Medigue C."/>
            <person name="Weissenbach J."/>
            <person name="Cruveiller S."/>
        </authorList>
    </citation>
    <scope>NUCLEOTIDE SEQUENCE [LARGE SCALE GENOMIC DNA]</scope>
    <source>
        <strain>SDF</strain>
    </source>
</reference>
<organism>
    <name type="scientific">Acinetobacter baumannii (strain SDF)</name>
    <dbReference type="NCBI Taxonomy" id="509170"/>
    <lineage>
        <taxon>Bacteria</taxon>
        <taxon>Pseudomonadati</taxon>
        <taxon>Pseudomonadota</taxon>
        <taxon>Gammaproteobacteria</taxon>
        <taxon>Moraxellales</taxon>
        <taxon>Moraxellaceae</taxon>
        <taxon>Acinetobacter</taxon>
        <taxon>Acinetobacter calcoaceticus/baumannii complex</taxon>
    </lineage>
</organism>
<evidence type="ECO:0000255" key="1">
    <source>
        <dbReference type="HAMAP-Rule" id="MF_00766"/>
    </source>
</evidence>
<comment type="function">
    <text evidence="1">Peptidoglycan polymerase that catalyzes glycan chain elongation from lipid-linked precursors.</text>
</comment>
<comment type="catalytic activity">
    <reaction evidence="1">
        <text>[GlcNAc-(1-&gt;4)-Mur2Ac(oyl-L-Ala-gamma-D-Glu-L-Lys-D-Ala-D-Ala)](n)-di-trans,octa-cis-undecaprenyl diphosphate + beta-D-GlcNAc-(1-&gt;4)-Mur2Ac(oyl-L-Ala-gamma-D-Glu-L-Lys-D-Ala-D-Ala)-di-trans,octa-cis-undecaprenyl diphosphate = [GlcNAc-(1-&gt;4)-Mur2Ac(oyl-L-Ala-gamma-D-Glu-L-Lys-D-Ala-D-Ala)](n+1)-di-trans,octa-cis-undecaprenyl diphosphate + di-trans,octa-cis-undecaprenyl diphosphate + H(+)</text>
        <dbReference type="Rhea" id="RHEA:23708"/>
        <dbReference type="Rhea" id="RHEA-COMP:9602"/>
        <dbReference type="Rhea" id="RHEA-COMP:9603"/>
        <dbReference type="ChEBI" id="CHEBI:15378"/>
        <dbReference type="ChEBI" id="CHEBI:58405"/>
        <dbReference type="ChEBI" id="CHEBI:60033"/>
        <dbReference type="ChEBI" id="CHEBI:78435"/>
        <dbReference type="EC" id="2.4.99.28"/>
    </reaction>
</comment>
<comment type="pathway">
    <text evidence="1">Cell wall biogenesis; peptidoglycan biosynthesis.</text>
</comment>
<comment type="subcellular location">
    <subcellularLocation>
        <location evidence="1">Cell inner membrane</location>
        <topology evidence="1">Single-pass membrane protein</topology>
    </subcellularLocation>
</comment>
<comment type="similarity">
    <text evidence="1">Belongs to the glycosyltransferase 51 family.</text>
</comment>
<protein>
    <recommendedName>
        <fullName evidence="1">Biosynthetic peptidoglycan transglycosylase</fullName>
        <ecNumber evidence="1">2.4.99.28</ecNumber>
    </recommendedName>
    <alternativeName>
        <fullName evidence="1">Glycan polymerase</fullName>
    </alternativeName>
    <alternativeName>
        <fullName evidence="1">Peptidoglycan glycosyltransferase MtgA</fullName>
        <shortName evidence="1">PGT</shortName>
    </alternativeName>
</protein>
<proteinExistence type="inferred from homology"/>
<name>MTGA_ACIBS</name>
<keyword id="KW-0997">Cell inner membrane</keyword>
<keyword id="KW-1003">Cell membrane</keyword>
<keyword id="KW-0133">Cell shape</keyword>
<keyword id="KW-0961">Cell wall biogenesis/degradation</keyword>
<keyword id="KW-0328">Glycosyltransferase</keyword>
<keyword id="KW-0472">Membrane</keyword>
<keyword id="KW-0573">Peptidoglycan synthesis</keyword>
<keyword id="KW-0808">Transferase</keyword>
<keyword id="KW-0812">Transmembrane</keyword>
<keyword id="KW-1133">Transmembrane helix</keyword>
<feature type="chain" id="PRO_1000133582" description="Biosynthetic peptidoglycan transglycosylase">
    <location>
        <begin position="1"/>
        <end position="225"/>
    </location>
</feature>
<feature type="transmembrane region" description="Helical" evidence="1">
    <location>
        <begin position="9"/>
        <end position="29"/>
    </location>
</feature>
<accession>B0VSQ2</accession>
<sequence>MKAFIVRMLLIFIGAILLIQLWIFSSLVWWRTHEVDTTMFMRIDYWSDPSEPIIHEWLDYDDISDNFKHAILAGEDAKFIHHHGFDWDGIRFALERNNEEGEVVAGGSTVSQQLAKNLFLYNKRSFIRKGQETVATWMMERMWSKRRILEVYMNSVEFGKNLYGVEAAAQYYYGKSAKSLTREQAAFLAALLPDPKYYQDHRNDRKLQYRKRVILRYMNSTQIPE</sequence>
<gene>
    <name evidence="1" type="primary">mtgA</name>
    <name type="ordered locus">ABSDF2409</name>
</gene>
<dbReference type="EC" id="2.4.99.28" evidence="1"/>
<dbReference type="EMBL" id="CU468230">
    <property type="protein sequence ID" value="CAP01720.1"/>
    <property type="molecule type" value="Genomic_DNA"/>
</dbReference>
<dbReference type="SMR" id="B0VSQ2"/>
<dbReference type="KEGG" id="abm:ABSDF2409"/>
<dbReference type="HOGENOM" id="CLU_006354_1_1_6"/>
<dbReference type="UniPathway" id="UPA00219"/>
<dbReference type="Proteomes" id="UP000001741">
    <property type="component" value="Chromosome"/>
</dbReference>
<dbReference type="GO" id="GO:0009274">
    <property type="term" value="C:peptidoglycan-based cell wall"/>
    <property type="evidence" value="ECO:0007669"/>
    <property type="project" value="InterPro"/>
</dbReference>
<dbReference type="GO" id="GO:0005886">
    <property type="term" value="C:plasma membrane"/>
    <property type="evidence" value="ECO:0007669"/>
    <property type="project" value="UniProtKB-SubCell"/>
</dbReference>
<dbReference type="GO" id="GO:0016763">
    <property type="term" value="F:pentosyltransferase activity"/>
    <property type="evidence" value="ECO:0007669"/>
    <property type="project" value="InterPro"/>
</dbReference>
<dbReference type="GO" id="GO:0008955">
    <property type="term" value="F:peptidoglycan glycosyltransferase activity"/>
    <property type="evidence" value="ECO:0007669"/>
    <property type="project" value="UniProtKB-UniRule"/>
</dbReference>
<dbReference type="GO" id="GO:0071555">
    <property type="term" value="P:cell wall organization"/>
    <property type="evidence" value="ECO:0007669"/>
    <property type="project" value="UniProtKB-KW"/>
</dbReference>
<dbReference type="GO" id="GO:0009252">
    <property type="term" value="P:peptidoglycan biosynthetic process"/>
    <property type="evidence" value="ECO:0007669"/>
    <property type="project" value="UniProtKB-UniRule"/>
</dbReference>
<dbReference type="GO" id="GO:0008360">
    <property type="term" value="P:regulation of cell shape"/>
    <property type="evidence" value="ECO:0007669"/>
    <property type="project" value="UniProtKB-KW"/>
</dbReference>
<dbReference type="Gene3D" id="1.10.3810.10">
    <property type="entry name" value="Biosynthetic peptidoglycan transglycosylase-like"/>
    <property type="match status" value="1"/>
</dbReference>
<dbReference type="HAMAP" id="MF_00766">
    <property type="entry name" value="PGT_MtgA"/>
    <property type="match status" value="1"/>
</dbReference>
<dbReference type="InterPro" id="IPR001264">
    <property type="entry name" value="Glyco_trans_51"/>
</dbReference>
<dbReference type="InterPro" id="IPR023346">
    <property type="entry name" value="Lysozyme-like_dom_sf"/>
</dbReference>
<dbReference type="InterPro" id="IPR036950">
    <property type="entry name" value="PBP_transglycosylase"/>
</dbReference>
<dbReference type="InterPro" id="IPR011812">
    <property type="entry name" value="Pep_trsgly"/>
</dbReference>
<dbReference type="NCBIfam" id="TIGR02070">
    <property type="entry name" value="mono_pep_trsgly"/>
    <property type="match status" value="1"/>
</dbReference>
<dbReference type="PANTHER" id="PTHR30400:SF0">
    <property type="entry name" value="BIOSYNTHETIC PEPTIDOGLYCAN TRANSGLYCOSYLASE"/>
    <property type="match status" value="1"/>
</dbReference>
<dbReference type="PANTHER" id="PTHR30400">
    <property type="entry name" value="MONOFUNCTIONAL BIOSYNTHETIC PEPTIDOGLYCAN TRANSGLYCOSYLASE"/>
    <property type="match status" value="1"/>
</dbReference>
<dbReference type="Pfam" id="PF00912">
    <property type="entry name" value="Transgly"/>
    <property type="match status" value="1"/>
</dbReference>
<dbReference type="SUPFAM" id="SSF53955">
    <property type="entry name" value="Lysozyme-like"/>
    <property type="match status" value="1"/>
</dbReference>